<name>TUS_SALHS</name>
<feature type="chain" id="PRO_1000126046" description="DNA replication terminus site-binding protein">
    <location>
        <begin position="1"/>
        <end position="309"/>
    </location>
</feature>
<comment type="function">
    <text evidence="1">Trans-acting protein required for termination of DNA replication. Binds to DNA replication terminator sequences (terA to terF) to prevent the passage of replication forks. The termination efficiency will be affected by the affinity of this protein for the terminator sequence.</text>
</comment>
<comment type="subcellular location">
    <subcellularLocation>
        <location evidence="1">Cytoplasm</location>
    </subcellularLocation>
</comment>
<comment type="similarity">
    <text evidence="1">Belongs to the Tus family.</text>
</comment>
<dbReference type="EMBL" id="CP001120">
    <property type="protein sequence ID" value="ACF69742.1"/>
    <property type="molecule type" value="Genomic_DNA"/>
</dbReference>
<dbReference type="RefSeq" id="WP_000092489.1">
    <property type="nucleotide sequence ID" value="NC_011083.1"/>
</dbReference>
<dbReference type="SMR" id="B4THQ0"/>
<dbReference type="KEGG" id="seh:SeHA_C1638"/>
<dbReference type="HOGENOM" id="CLU_078181_0_0_6"/>
<dbReference type="Proteomes" id="UP000001866">
    <property type="component" value="Chromosome"/>
</dbReference>
<dbReference type="GO" id="GO:0005737">
    <property type="term" value="C:cytoplasm"/>
    <property type="evidence" value="ECO:0007669"/>
    <property type="project" value="UniProtKB-SubCell"/>
</dbReference>
<dbReference type="GO" id="GO:0003677">
    <property type="term" value="F:DNA binding"/>
    <property type="evidence" value="ECO:0007669"/>
    <property type="project" value="UniProtKB-UniRule"/>
</dbReference>
<dbReference type="GO" id="GO:0006274">
    <property type="term" value="P:DNA replication termination"/>
    <property type="evidence" value="ECO:0007669"/>
    <property type="project" value="UniProtKB-UniRule"/>
</dbReference>
<dbReference type="Gene3D" id="3.30.54.10">
    <property type="match status" value="1"/>
</dbReference>
<dbReference type="Gene3D" id="3.50.14.10">
    <property type="entry name" value="Replication terminator Tus, domain 1 superfamily/Replication terminator Tus"/>
    <property type="match status" value="1"/>
</dbReference>
<dbReference type="HAMAP" id="MF_00483">
    <property type="entry name" value="Rep_term_Tus"/>
    <property type="match status" value="1"/>
</dbReference>
<dbReference type="InterPro" id="IPR008865">
    <property type="entry name" value="DNA_replication_term_site-bd"/>
</dbReference>
<dbReference type="InterPro" id="IPR036381">
    <property type="entry name" value="Tus_dom1"/>
</dbReference>
<dbReference type="InterPro" id="IPR036384">
    <property type="entry name" value="Tus_sf"/>
</dbReference>
<dbReference type="NCBIfam" id="TIGR02648">
    <property type="entry name" value="rep_term_tus"/>
    <property type="match status" value="1"/>
</dbReference>
<dbReference type="Pfam" id="PF05472">
    <property type="entry name" value="Ter"/>
    <property type="match status" value="1"/>
</dbReference>
<dbReference type="SUPFAM" id="SSF56596">
    <property type="entry name" value="Replication terminator protein (Tus)"/>
    <property type="match status" value="1"/>
</dbReference>
<reference key="1">
    <citation type="journal article" date="2011" name="J. Bacteriol.">
        <title>Comparative genomics of 28 Salmonella enterica isolates: evidence for CRISPR-mediated adaptive sublineage evolution.</title>
        <authorList>
            <person name="Fricke W.F."/>
            <person name="Mammel M.K."/>
            <person name="McDermott P.F."/>
            <person name="Tartera C."/>
            <person name="White D.G."/>
            <person name="Leclerc J.E."/>
            <person name="Ravel J."/>
            <person name="Cebula T.A."/>
        </authorList>
    </citation>
    <scope>NUCLEOTIDE SEQUENCE [LARGE SCALE GENOMIC DNA]</scope>
    <source>
        <strain>SL476</strain>
    </source>
</reference>
<organism>
    <name type="scientific">Salmonella heidelberg (strain SL476)</name>
    <dbReference type="NCBI Taxonomy" id="454169"/>
    <lineage>
        <taxon>Bacteria</taxon>
        <taxon>Pseudomonadati</taxon>
        <taxon>Pseudomonadota</taxon>
        <taxon>Gammaproteobacteria</taxon>
        <taxon>Enterobacterales</taxon>
        <taxon>Enterobacteriaceae</taxon>
        <taxon>Salmonella</taxon>
    </lineage>
</organism>
<gene>
    <name evidence="1" type="primary">tus</name>
    <name type="ordered locus">SeHA_C1638</name>
</gene>
<sequence>MSRYDLVERLNGTFRQIEQHLAALTDNLQQHSLLIARVFSLPQVTKEAEHAPLDTIEVTQHLGKEAEALALRHYRHLFIQQQSENRSSKAAVRLPGVLCYQVDNATQLDLENQIQRINQLKTTFEQMVTVESGLPSAARFEWVHRHLPGLITLNAYRTLTLINNPATIRFGWANKHIIKNLSRDEVLSQLKKSLASPRSVPPWTREQWQFKLEREYQDIAALPQQARLKIKRPVKVQPIARIWYKGQQKQVQHACPTPIIALINTDNGAGVPDIGGLENYDADNIQHRFKPQAQPLRLIIPRLHLYVAD</sequence>
<proteinExistence type="inferred from homology"/>
<accession>B4THQ0</accession>
<keyword id="KW-0963">Cytoplasm</keyword>
<keyword id="KW-0235">DNA replication</keyword>
<keyword id="KW-0238">DNA-binding</keyword>
<evidence type="ECO:0000255" key="1">
    <source>
        <dbReference type="HAMAP-Rule" id="MF_00483"/>
    </source>
</evidence>
<protein>
    <recommendedName>
        <fullName evidence="1">DNA replication terminus site-binding protein</fullName>
        <shortName evidence="1">Ter-binding protein</shortName>
    </recommendedName>
</protein>